<accession>A7FMF9</accession>
<sequence>MYHVIAATTNPAKINAITLAFDDVYGPGQYRIEGVNVDSGVPLQPIGSTETRIGARQRVKNARQVRPKADFWVGIEAGIEDNMTFAWMVIEHLQARGESRSASLMLPDIILQGIRQGRELGDEMAVLSGISNVKQQGGAIGIFTQGKLTRTSVYHQALLLALVPFHNEIYQRPSPSKPAI</sequence>
<dbReference type="EC" id="3.6.1.73" evidence="1"/>
<dbReference type="EMBL" id="CP000720">
    <property type="protein sequence ID" value="ABS46487.1"/>
    <property type="molecule type" value="Genomic_DNA"/>
</dbReference>
<dbReference type="SMR" id="A7FMF9"/>
<dbReference type="KEGG" id="ypi:YpsIP31758_3483"/>
<dbReference type="HOGENOM" id="CLU_087417_1_0_6"/>
<dbReference type="Proteomes" id="UP000002412">
    <property type="component" value="Chromosome"/>
</dbReference>
<dbReference type="GO" id="GO:0103023">
    <property type="term" value="F:ITPase activity"/>
    <property type="evidence" value="ECO:0007669"/>
    <property type="project" value="UniProtKB-EC"/>
</dbReference>
<dbReference type="GO" id="GO:0046872">
    <property type="term" value="F:metal ion binding"/>
    <property type="evidence" value="ECO:0007669"/>
    <property type="project" value="UniProtKB-KW"/>
</dbReference>
<dbReference type="GO" id="GO:0000166">
    <property type="term" value="F:nucleotide binding"/>
    <property type="evidence" value="ECO:0007669"/>
    <property type="project" value="UniProtKB-KW"/>
</dbReference>
<dbReference type="GO" id="GO:0017111">
    <property type="term" value="F:ribonucleoside triphosphate phosphatase activity"/>
    <property type="evidence" value="ECO:0000250"/>
    <property type="project" value="UniProtKB"/>
</dbReference>
<dbReference type="GO" id="GO:0009117">
    <property type="term" value="P:nucleotide metabolic process"/>
    <property type="evidence" value="ECO:0007669"/>
    <property type="project" value="UniProtKB-KW"/>
</dbReference>
<dbReference type="GO" id="GO:0006772">
    <property type="term" value="P:thiamine metabolic process"/>
    <property type="evidence" value="ECO:0007669"/>
    <property type="project" value="TreeGrafter"/>
</dbReference>
<dbReference type="FunFam" id="3.90.950.10:FF:000002">
    <property type="entry name" value="Inosine/xanthosine triphosphatase"/>
    <property type="match status" value="1"/>
</dbReference>
<dbReference type="Gene3D" id="3.90.950.10">
    <property type="match status" value="1"/>
</dbReference>
<dbReference type="HAMAP" id="MF_00648">
    <property type="entry name" value="Non_canon_purine_NTPase_YjjX"/>
    <property type="match status" value="1"/>
</dbReference>
<dbReference type="InterPro" id="IPR029001">
    <property type="entry name" value="ITPase-like_fam"/>
</dbReference>
<dbReference type="InterPro" id="IPR002786">
    <property type="entry name" value="Non_canon_purine_NTPase"/>
</dbReference>
<dbReference type="InterPro" id="IPR026533">
    <property type="entry name" value="NTPase/PRRC1"/>
</dbReference>
<dbReference type="InterPro" id="IPR050299">
    <property type="entry name" value="YjjX_NTPase"/>
</dbReference>
<dbReference type="NCBIfam" id="TIGR00258">
    <property type="entry name" value="inosine/xanthosine triphosphatase"/>
    <property type="match status" value="1"/>
</dbReference>
<dbReference type="NCBIfam" id="NF003459">
    <property type="entry name" value="PRK05074.1"/>
    <property type="match status" value="1"/>
</dbReference>
<dbReference type="PANTHER" id="PTHR34699">
    <property type="match status" value="1"/>
</dbReference>
<dbReference type="PANTHER" id="PTHR34699:SF2">
    <property type="entry name" value="NON-CANONICAL PURINE NTP PHOSPHATASE_PRRC1 DOMAIN-CONTAINING PROTEIN"/>
    <property type="match status" value="1"/>
</dbReference>
<dbReference type="Pfam" id="PF01931">
    <property type="entry name" value="NTPase_I-T"/>
    <property type="match status" value="1"/>
</dbReference>
<dbReference type="SUPFAM" id="SSF52972">
    <property type="entry name" value="ITPase-like"/>
    <property type="match status" value="1"/>
</dbReference>
<reference key="1">
    <citation type="journal article" date="2007" name="PLoS Genet.">
        <title>The complete genome sequence of Yersinia pseudotuberculosis IP31758, the causative agent of Far East scarlet-like fever.</title>
        <authorList>
            <person name="Eppinger M."/>
            <person name="Rosovitz M.J."/>
            <person name="Fricke W.F."/>
            <person name="Rasko D.A."/>
            <person name="Kokorina G."/>
            <person name="Fayolle C."/>
            <person name="Lindler L.E."/>
            <person name="Carniel E."/>
            <person name="Ravel J."/>
        </authorList>
    </citation>
    <scope>NUCLEOTIDE SEQUENCE [LARGE SCALE GENOMIC DNA]</scope>
    <source>
        <strain>IP 31758</strain>
    </source>
</reference>
<evidence type="ECO:0000255" key="1">
    <source>
        <dbReference type="HAMAP-Rule" id="MF_00648"/>
    </source>
</evidence>
<gene>
    <name type="ordered locus">YpsIP31758_3483</name>
</gene>
<organism>
    <name type="scientific">Yersinia pseudotuberculosis serotype O:1b (strain IP 31758)</name>
    <dbReference type="NCBI Taxonomy" id="349747"/>
    <lineage>
        <taxon>Bacteria</taxon>
        <taxon>Pseudomonadati</taxon>
        <taxon>Pseudomonadota</taxon>
        <taxon>Gammaproteobacteria</taxon>
        <taxon>Enterobacterales</taxon>
        <taxon>Yersiniaceae</taxon>
        <taxon>Yersinia</taxon>
    </lineage>
</organism>
<proteinExistence type="inferred from homology"/>
<comment type="function">
    <text evidence="1">Phosphatase that hydrolyzes non-canonical purine nucleotides such as XTP and ITP to their respective diphosphate derivatives. Probably excludes non-canonical purines from DNA/RNA precursor pool, thus preventing their incorporation into DNA/RNA and avoiding chromosomal lesions.</text>
</comment>
<comment type="catalytic activity">
    <reaction evidence="1">
        <text>XTP + H2O = XDP + phosphate + H(+)</text>
        <dbReference type="Rhea" id="RHEA:28406"/>
        <dbReference type="ChEBI" id="CHEBI:15377"/>
        <dbReference type="ChEBI" id="CHEBI:15378"/>
        <dbReference type="ChEBI" id="CHEBI:43474"/>
        <dbReference type="ChEBI" id="CHEBI:59884"/>
        <dbReference type="ChEBI" id="CHEBI:61314"/>
        <dbReference type="EC" id="3.6.1.73"/>
    </reaction>
</comment>
<comment type="catalytic activity">
    <reaction evidence="1">
        <text>ITP + H2O = IDP + phosphate + H(+)</text>
        <dbReference type="Rhea" id="RHEA:28330"/>
        <dbReference type="ChEBI" id="CHEBI:15377"/>
        <dbReference type="ChEBI" id="CHEBI:15378"/>
        <dbReference type="ChEBI" id="CHEBI:43474"/>
        <dbReference type="ChEBI" id="CHEBI:58280"/>
        <dbReference type="ChEBI" id="CHEBI:61402"/>
        <dbReference type="EC" id="3.6.1.73"/>
    </reaction>
</comment>
<comment type="cofactor">
    <cofactor evidence="1">
        <name>Mg(2+)</name>
        <dbReference type="ChEBI" id="CHEBI:18420"/>
    </cofactor>
    <cofactor evidence="1">
        <name>Mn(2+)</name>
        <dbReference type="ChEBI" id="CHEBI:29035"/>
    </cofactor>
    <text evidence="1">Binds 1 divalent metal cation per subunit; can use either Mg(2+) or Mn(2+).</text>
</comment>
<comment type="subunit">
    <text evidence="1">Homodimer.</text>
</comment>
<comment type="similarity">
    <text evidence="1">Belongs to the YjjX NTPase family.</text>
</comment>
<name>NCPP_YERP3</name>
<feature type="chain" id="PRO_1000061463" description="Inosine/xanthosine triphosphatase">
    <location>
        <begin position="1"/>
        <end position="180"/>
    </location>
</feature>
<feature type="binding site" evidence="1">
    <location>
        <begin position="8"/>
        <end position="13"/>
    </location>
    <ligand>
        <name>substrate</name>
    </ligand>
</feature>
<feature type="binding site" evidence="1">
    <location>
        <position position="38"/>
    </location>
    <ligand>
        <name>Mg(2+)</name>
        <dbReference type="ChEBI" id="CHEBI:18420"/>
    </ligand>
</feature>
<keyword id="KW-0378">Hydrolase</keyword>
<keyword id="KW-0460">Magnesium</keyword>
<keyword id="KW-0464">Manganese</keyword>
<keyword id="KW-0479">Metal-binding</keyword>
<keyword id="KW-0546">Nucleotide metabolism</keyword>
<keyword id="KW-0547">Nucleotide-binding</keyword>
<protein>
    <recommendedName>
        <fullName evidence="1">Inosine/xanthosine triphosphatase</fullName>
        <shortName evidence="1">ITPase/XTPase</shortName>
        <ecNumber evidence="1">3.6.1.73</ecNumber>
    </recommendedName>
    <alternativeName>
        <fullName evidence="1">Non-canonical purine NTP phosphatase</fullName>
    </alternativeName>
    <alternativeName>
        <fullName evidence="1">Non-standard purine NTP phosphatase</fullName>
    </alternativeName>
    <alternativeName>
        <fullName evidence="1">Nucleoside-triphosphate phosphatase</fullName>
        <shortName evidence="1">NTPase</shortName>
    </alternativeName>
</protein>